<sequence>MSDAFDINDLKRRMEGAVNALKHDLGGLRTGRASASLLEPITIEAYGSTMPINQVANISVPESRMLSVSVWDKSMVGAVERAIRDSGLGLNPITDGMTLRIPLPELNEQRRKELVKIAHQYAEQGRIAARHVRRDGMDQLKKLEKDSVISQDESRVLSEKVQKLTDDTIAEMDKIVAVKEGEIMQV</sequence>
<gene>
    <name evidence="1" type="primary">frr</name>
    <name type="ordered locus">BAbS19_I10980</name>
</gene>
<keyword id="KW-0963">Cytoplasm</keyword>
<keyword id="KW-0648">Protein biosynthesis</keyword>
<reference key="1">
    <citation type="journal article" date="2008" name="PLoS ONE">
        <title>Genome sequence of Brucella abortus vaccine strain S19 compared to virulent strains yields candidate virulence genes.</title>
        <authorList>
            <person name="Crasta O.R."/>
            <person name="Folkerts O."/>
            <person name="Fei Z."/>
            <person name="Mane S.P."/>
            <person name="Evans C."/>
            <person name="Martino-Catt S."/>
            <person name="Bricker B."/>
            <person name="Yu G."/>
            <person name="Du L."/>
            <person name="Sobral B.W."/>
        </authorList>
    </citation>
    <scope>NUCLEOTIDE SEQUENCE [LARGE SCALE GENOMIC DNA]</scope>
    <source>
        <strain>S19</strain>
    </source>
</reference>
<comment type="function">
    <text evidence="1">Responsible for the release of ribosomes from messenger RNA at the termination of protein biosynthesis. May increase the efficiency of translation by recycling ribosomes from one round of translation to another.</text>
</comment>
<comment type="subcellular location">
    <subcellularLocation>
        <location evidence="1">Cytoplasm</location>
    </subcellularLocation>
</comment>
<comment type="similarity">
    <text evidence="1">Belongs to the RRF family.</text>
</comment>
<evidence type="ECO:0000255" key="1">
    <source>
        <dbReference type="HAMAP-Rule" id="MF_00040"/>
    </source>
</evidence>
<feature type="chain" id="PRO_1000090714" description="Ribosome-recycling factor">
    <location>
        <begin position="1"/>
        <end position="186"/>
    </location>
</feature>
<organism>
    <name type="scientific">Brucella abortus (strain S19)</name>
    <dbReference type="NCBI Taxonomy" id="430066"/>
    <lineage>
        <taxon>Bacteria</taxon>
        <taxon>Pseudomonadati</taxon>
        <taxon>Pseudomonadota</taxon>
        <taxon>Alphaproteobacteria</taxon>
        <taxon>Hyphomicrobiales</taxon>
        <taxon>Brucellaceae</taxon>
        <taxon>Brucella/Ochrobactrum group</taxon>
        <taxon>Brucella</taxon>
    </lineage>
</organism>
<dbReference type="EMBL" id="CP000887">
    <property type="protein sequence ID" value="ACD72605.1"/>
    <property type="molecule type" value="Genomic_DNA"/>
</dbReference>
<dbReference type="RefSeq" id="WP_002964286.1">
    <property type="nucleotide sequence ID" value="NC_010742.1"/>
</dbReference>
<dbReference type="SMR" id="B2S608"/>
<dbReference type="GeneID" id="97533591"/>
<dbReference type="KEGG" id="bmc:BAbS19_I10980"/>
<dbReference type="HOGENOM" id="CLU_073981_2_0_5"/>
<dbReference type="Proteomes" id="UP000002565">
    <property type="component" value="Chromosome 1"/>
</dbReference>
<dbReference type="GO" id="GO:0005829">
    <property type="term" value="C:cytosol"/>
    <property type="evidence" value="ECO:0007669"/>
    <property type="project" value="GOC"/>
</dbReference>
<dbReference type="GO" id="GO:0043023">
    <property type="term" value="F:ribosomal large subunit binding"/>
    <property type="evidence" value="ECO:0007669"/>
    <property type="project" value="TreeGrafter"/>
</dbReference>
<dbReference type="GO" id="GO:0002184">
    <property type="term" value="P:cytoplasmic translational termination"/>
    <property type="evidence" value="ECO:0007669"/>
    <property type="project" value="TreeGrafter"/>
</dbReference>
<dbReference type="CDD" id="cd00520">
    <property type="entry name" value="RRF"/>
    <property type="match status" value="1"/>
</dbReference>
<dbReference type="FunFam" id="1.10.132.20:FF:000001">
    <property type="entry name" value="Ribosome-recycling factor"/>
    <property type="match status" value="1"/>
</dbReference>
<dbReference type="FunFam" id="3.30.1360.40:FF:000001">
    <property type="entry name" value="Ribosome-recycling factor"/>
    <property type="match status" value="1"/>
</dbReference>
<dbReference type="Gene3D" id="3.30.1360.40">
    <property type="match status" value="1"/>
</dbReference>
<dbReference type="Gene3D" id="1.10.132.20">
    <property type="entry name" value="Ribosome-recycling factor"/>
    <property type="match status" value="1"/>
</dbReference>
<dbReference type="HAMAP" id="MF_00040">
    <property type="entry name" value="RRF"/>
    <property type="match status" value="1"/>
</dbReference>
<dbReference type="InterPro" id="IPR002661">
    <property type="entry name" value="Ribosome_recyc_fac"/>
</dbReference>
<dbReference type="InterPro" id="IPR023584">
    <property type="entry name" value="Ribosome_recyc_fac_dom"/>
</dbReference>
<dbReference type="InterPro" id="IPR036191">
    <property type="entry name" value="RRF_sf"/>
</dbReference>
<dbReference type="NCBIfam" id="TIGR00496">
    <property type="entry name" value="frr"/>
    <property type="match status" value="1"/>
</dbReference>
<dbReference type="PANTHER" id="PTHR20982:SF3">
    <property type="entry name" value="MITOCHONDRIAL RIBOSOME RECYCLING FACTOR PSEUDO 1"/>
    <property type="match status" value="1"/>
</dbReference>
<dbReference type="PANTHER" id="PTHR20982">
    <property type="entry name" value="RIBOSOME RECYCLING FACTOR"/>
    <property type="match status" value="1"/>
</dbReference>
<dbReference type="Pfam" id="PF01765">
    <property type="entry name" value="RRF"/>
    <property type="match status" value="1"/>
</dbReference>
<dbReference type="SUPFAM" id="SSF55194">
    <property type="entry name" value="Ribosome recycling factor, RRF"/>
    <property type="match status" value="1"/>
</dbReference>
<protein>
    <recommendedName>
        <fullName evidence="1">Ribosome-recycling factor</fullName>
        <shortName evidence="1">RRF</shortName>
    </recommendedName>
    <alternativeName>
        <fullName evidence="1">Ribosome-releasing factor</fullName>
    </alternativeName>
</protein>
<proteinExistence type="inferred from homology"/>
<name>RRF_BRUA1</name>
<accession>B2S608</accession>